<dbReference type="EMBL" id="CP000606">
    <property type="protein sequence ID" value="ABO22201.1"/>
    <property type="molecule type" value="Genomic_DNA"/>
</dbReference>
<dbReference type="RefSeq" id="WP_011864135.1">
    <property type="nucleotide sequence ID" value="NC_009092.1"/>
</dbReference>
<dbReference type="SMR" id="A3Q9Q3"/>
<dbReference type="STRING" id="323850.Shew_0329"/>
<dbReference type="KEGG" id="slo:Shew_0329"/>
<dbReference type="eggNOG" id="COG2901">
    <property type="taxonomic scope" value="Bacteria"/>
</dbReference>
<dbReference type="HOGENOM" id="CLU_158040_3_3_6"/>
<dbReference type="OrthoDB" id="9802388at2"/>
<dbReference type="Proteomes" id="UP000001558">
    <property type="component" value="Chromosome"/>
</dbReference>
<dbReference type="GO" id="GO:0003700">
    <property type="term" value="F:DNA-binding transcription factor activity"/>
    <property type="evidence" value="ECO:0007669"/>
    <property type="project" value="UniProtKB-UniRule"/>
</dbReference>
<dbReference type="GO" id="GO:0043565">
    <property type="term" value="F:sequence-specific DNA binding"/>
    <property type="evidence" value="ECO:0007669"/>
    <property type="project" value="InterPro"/>
</dbReference>
<dbReference type="FunFam" id="1.10.10.60:FF:000006">
    <property type="entry name" value="DNA-binding protein Fis"/>
    <property type="match status" value="1"/>
</dbReference>
<dbReference type="Gene3D" id="1.10.10.60">
    <property type="entry name" value="Homeodomain-like"/>
    <property type="match status" value="1"/>
</dbReference>
<dbReference type="HAMAP" id="MF_00166">
    <property type="entry name" value="DNA_binding_Fis"/>
    <property type="match status" value="1"/>
</dbReference>
<dbReference type="InterPro" id="IPR005412">
    <property type="entry name" value="Fis_DNA-bd"/>
</dbReference>
<dbReference type="InterPro" id="IPR009057">
    <property type="entry name" value="Homeodomain-like_sf"/>
</dbReference>
<dbReference type="InterPro" id="IPR002197">
    <property type="entry name" value="HTH_Fis"/>
</dbReference>
<dbReference type="InterPro" id="IPR050207">
    <property type="entry name" value="Trans_regulatory_Fis"/>
</dbReference>
<dbReference type="NCBIfam" id="NF001659">
    <property type="entry name" value="PRK00430.1"/>
    <property type="match status" value="1"/>
</dbReference>
<dbReference type="PANTHER" id="PTHR47918">
    <property type="entry name" value="DNA-BINDING PROTEIN FIS"/>
    <property type="match status" value="1"/>
</dbReference>
<dbReference type="PANTHER" id="PTHR47918:SF1">
    <property type="entry name" value="DNA-BINDING PROTEIN FIS"/>
    <property type="match status" value="1"/>
</dbReference>
<dbReference type="Pfam" id="PF02954">
    <property type="entry name" value="HTH_8"/>
    <property type="match status" value="1"/>
</dbReference>
<dbReference type="PIRSF" id="PIRSF002097">
    <property type="entry name" value="DNA-binding_Fis"/>
    <property type="match status" value="1"/>
</dbReference>
<dbReference type="PRINTS" id="PR01591">
    <property type="entry name" value="DNABINDNGFIS"/>
</dbReference>
<dbReference type="PRINTS" id="PR01590">
    <property type="entry name" value="HTHFIS"/>
</dbReference>
<dbReference type="SUPFAM" id="SSF46689">
    <property type="entry name" value="Homeodomain-like"/>
    <property type="match status" value="1"/>
</dbReference>
<protein>
    <recommendedName>
        <fullName evidence="1">DNA-binding protein Fis</fullName>
    </recommendedName>
</protein>
<organism>
    <name type="scientific">Shewanella loihica (strain ATCC BAA-1088 / PV-4)</name>
    <dbReference type="NCBI Taxonomy" id="323850"/>
    <lineage>
        <taxon>Bacteria</taxon>
        <taxon>Pseudomonadati</taxon>
        <taxon>Pseudomonadota</taxon>
        <taxon>Gammaproteobacteria</taxon>
        <taxon>Alteromonadales</taxon>
        <taxon>Shewanellaceae</taxon>
        <taxon>Shewanella</taxon>
    </lineage>
</organism>
<evidence type="ECO:0000255" key="1">
    <source>
        <dbReference type="HAMAP-Rule" id="MF_00166"/>
    </source>
</evidence>
<sequence length="101" mass="11407">MFDQTTQPEAHQLTVGKIETANGTIKPQLLRDAVKRAVTNFFAQMDGQEAEEVYEMVLCEVEAPLLDIIMQHTRGNQTRAANMLGINRGTLRKKLKKYGMN</sequence>
<name>FIS_SHELP</name>
<keyword id="KW-0010">Activator</keyword>
<keyword id="KW-0238">DNA-binding</keyword>
<keyword id="KW-1185">Reference proteome</keyword>
<keyword id="KW-0804">Transcription</keyword>
<keyword id="KW-0805">Transcription regulation</keyword>
<accession>A3Q9Q3</accession>
<comment type="function">
    <text evidence="1">Activates ribosomal RNA transcription. Plays a direct role in upstream activation of rRNA promoters.</text>
</comment>
<comment type="subunit">
    <text evidence="1">Homodimer.</text>
</comment>
<comment type="similarity">
    <text evidence="1">Belongs to the transcriptional regulatory Fis family.</text>
</comment>
<gene>
    <name evidence="1" type="primary">fis</name>
    <name type="ordered locus">Shew_0329</name>
</gene>
<proteinExistence type="inferred from homology"/>
<reference key="1">
    <citation type="submission" date="2007-03" db="EMBL/GenBank/DDBJ databases">
        <title>Complete sequence of Shewanella loihica PV-4.</title>
        <authorList>
            <consortium name="US DOE Joint Genome Institute"/>
            <person name="Copeland A."/>
            <person name="Lucas S."/>
            <person name="Lapidus A."/>
            <person name="Barry K."/>
            <person name="Detter J.C."/>
            <person name="Glavina del Rio T."/>
            <person name="Hammon N."/>
            <person name="Israni S."/>
            <person name="Dalin E."/>
            <person name="Tice H."/>
            <person name="Pitluck S."/>
            <person name="Chain P."/>
            <person name="Malfatti S."/>
            <person name="Shin M."/>
            <person name="Vergez L."/>
            <person name="Schmutz J."/>
            <person name="Larimer F."/>
            <person name="Land M."/>
            <person name="Hauser L."/>
            <person name="Kyrpides N."/>
            <person name="Mikhailova N."/>
            <person name="Romine M.F."/>
            <person name="Serres G."/>
            <person name="Fredrickson J."/>
            <person name="Tiedje J."/>
            <person name="Richardson P."/>
        </authorList>
    </citation>
    <scope>NUCLEOTIDE SEQUENCE [LARGE SCALE GENOMIC DNA]</scope>
    <source>
        <strain>ATCC BAA-1088 / PV-4</strain>
    </source>
</reference>
<feature type="chain" id="PRO_1000023339" description="DNA-binding protein Fis">
    <location>
        <begin position="1"/>
        <end position="101"/>
    </location>
</feature>
<feature type="DNA-binding region" description="H-T-H motif" evidence="1">
    <location>
        <begin position="77"/>
        <end position="96"/>
    </location>
</feature>